<proteinExistence type="inferred from homology"/>
<feature type="chain" id="PRO_1000053565" description="Protein GrpE">
    <location>
        <begin position="1"/>
        <end position="176"/>
    </location>
</feature>
<feature type="region of interest" description="Disordered" evidence="2">
    <location>
        <begin position="1"/>
        <end position="31"/>
    </location>
</feature>
<keyword id="KW-0143">Chaperone</keyword>
<keyword id="KW-0963">Cytoplasm</keyword>
<keyword id="KW-0346">Stress response</keyword>
<reference key="1">
    <citation type="submission" date="2007-07" db="EMBL/GenBank/DDBJ databases">
        <title>Complete genome sequence of Campylobacter jejuni subsp doylei 269.97 isolated from human blood.</title>
        <authorList>
            <person name="Fouts D.E."/>
            <person name="Mongodin E.F."/>
            <person name="Puiu D."/>
            <person name="Sebastian Y."/>
            <person name="Miller W.G."/>
            <person name="Mandrell R.E."/>
            <person name="Lastovica A.J."/>
            <person name="Nelson K.E."/>
        </authorList>
    </citation>
    <scope>NUCLEOTIDE SEQUENCE [LARGE SCALE GENOMIC DNA]</scope>
    <source>
        <strain>ATCC BAA-1458 / RM4099 / 269.97</strain>
    </source>
</reference>
<accession>A7H485</accession>
<evidence type="ECO:0000255" key="1">
    <source>
        <dbReference type="HAMAP-Rule" id="MF_01151"/>
    </source>
</evidence>
<evidence type="ECO:0000256" key="2">
    <source>
        <dbReference type="SAM" id="MobiDB-lite"/>
    </source>
</evidence>
<dbReference type="EMBL" id="CP000768">
    <property type="protein sequence ID" value="ABS43636.1"/>
    <property type="molecule type" value="Genomic_DNA"/>
</dbReference>
<dbReference type="SMR" id="A7H485"/>
<dbReference type="KEGG" id="cjd:JJD26997_1259"/>
<dbReference type="HOGENOM" id="CLU_057217_6_3_7"/>
<dbReference type="Proteomes" id="UP000002302">
    <property type="component" value="Chromosome"/>
</dbReference>
<dbReference type="GO" id="GO:0005829">
    <property type="term" value="C:cytosol"/>
    <property type="evidence" value="ECO:0007669"/>
    <property type="project" value="TreeGrafter"/>
</dbReference>
<dbReference type="GO" id="GO:0000774">
    <property type="term" value="F:adenyl-nucleotide exchange factor activity"/>
    <property type="evidence" value="ECO:0007669"/>
    <property type="project" value="InterPro"/>
</dbReference>
<dbReference type="GO" id="GO:0042803">
    <property type="term" value="F:protein homodimerization activity"/>
    <property type="evidence" value="ECO:0007669"/>
    <property type="project" value="InterPro"/>
</dbReference>
<dbReference type="GO" id="GO:0051087">
    <property type="term" value="F:protein-folding chaperone binding"/>
    <property type="evidence" value="ECO:0007669"/>
    <property type="project" value="InterPro"/>
</dbReference>
<dbReference type="GO" id="GO:0051082">
    <property type="term" value="F:unfolded protein binding"/>
    <property type="evidence" value="ECO:0007669"/>
    <property type="project" value="TreeGrafter"/>
</dbReference>
<dbReference type="GO" id="GO:0006457">
    <property type="term" value="P:protein folding"/>
    <property type="evidence" value="ECO:0007669"/>
    <property type="project" value="InterPro"/>
</dbReference>
<dbReference type="CDD" id="cd00446">
    <property type="entry name" value="GrpE"/>
    <property type="match status" value="1"/>
</dbReference>
<dbReference type="FunFam" id="2.30.22.10:FF:000001">
    <property type="entry name" value="Protein GrpE"/>
    <property type="match status" value="1"/>
</dbReference>
<dbReference type="Gene3D" id="3.90.20.20">
    <property type="match status" value="1"/>
</dbReference>
<dbReference type="Gene3D" id="2.30.22.10">
    <property type="entry name" value="Head domain of nucleotide exchange factor GrpE"/>
    <property type="match status" value="1"/>
</dbReference>
<dbReference type="HAMAP" id="MF_01151">
    <property type="entry name" value="GrpE"/>
    <property type="match status" value="1"/>
</dbReference>
<dbReference type="InterPro" id="IPR000740">
    <property type="entry name" value="GrpE"/>
</dbReference>
<dbReference type="InterPro" id="IPR013805">
    <property type="entry name" value="GrpE_coiled_coil"/>
</dbReference>
<dbReference type="InterPro" id="IPR009012">
    <property type="entry name" value="GrpE_head"/>
</dbReference>
<dbReference type="NCBIfam" id="NF010738">
    <property type="entry name" value="PRK14140.1"/>
    <property type="match status" value="1"/>
</dbReference>
<dbReference type="NCBIfam" id="NF010756">
    <property type="entry name" value="PRK14159.1"/>
    <property type="match status" value="1"/>
</dbReference>
<dbReference type="PANTHER" id="PTHR21237">
    <property type="entry name" value="GRPE PROTEIN"/>
    <property type="match status" value="1"/>
</dbReference>
<dbReference type="PANTHER" id="PTHR21237:SF23">
    <property type="entry name" value="GRPE PROTEIN HOMOLOG, MITOCHONDRIAL"/>
    <property type="match status" value="1"/>
</dbReference>
<dbReference type="Pfam" id="PF01025">
    <property type="entry name" value="GrpE"/>
    <property type="match status" value="1"/>
</dbReference>
<dbReference type="PRINTS" id="PR00773">
    <property type="entry name" value="GRPEPROTEIN"/>
</dbReference>
<dbReference type="SUPFAM" id="SSF58014">
    <property type="entry name" value="Coiled-coil domain of nucleotide exchange factor GrpE"/>
    <property type="match status" value="1"/>
</dbReference>
<dbReference type="SUPFAM" id="SSF51064">
    <property type="entry name" value="Head domain of nucleotide exchange factor GrpE"/>
    <property type="match status" value="1"/>
</dbReference>
<dbReference type="PROSITE" id="PS01071">
    <property type="entry name" value="GRPE"/>
    <property type="match status" value="1"/>
</dbReference>
<organism>
    <name type="scientific">Campylobacter jejuni subsp. doylei (strain ATCC BAA-1458 / RM4099 / 269.97)</name>
    <dbReference type="NCBI Taxonomy" id="360109"/>
    <lineage>
        <taxon>Bacteria</taxon>
        <taxon>Pseudomonadati</taxon>
        <taxon>Campylobacterota</taxon>
        <taxon>Epsilonproteobacteria</taxon>
        <taxon>Campylobacterales</taxon>
        <taxon>Campylobacteraceae</taxon>
        <taxon>Campylobacter</taxon>
    </lineage>
</organism>
<name>GRPE_CAMJD</name>
<gene>
    <name evidence="1" type="primary">grpE</name>
    <name type="ordered locus">JJD26997_1259</name>
</gene>
<sequence>MSEQKQEFENENAENSEHLQDENLQNIEDVEQNKLQKDYDELKDKYMRANAEFENIKKRMEKEKLSAMAYANESFAKDLLDVLDALEAAINVECHDEISLKIKEGVQNTLDLFLKKLEKYGVTLIKEEKEFDPNLHEAMFHVDGENHQSGEVVTVLQKGYKIADRVIRPTKVSVAK</sequence>
<protein>
    <recommendedName>
        <fullName evidence="1">Protein GrpE</fullName>
    </recommendedName>
    <alternativeName>
        <fullName evidence="1">HSP-70 cofactor</fullName>
    </alternativeName>
</protein>
<comment type="function">
    <text evidence="1">Participates actively in the response to hyperosmotic and heat shock by preventing the aggregation of stress-denatured proteins, in association with DnaK and GrpE. It is the nucleotide exchange factor for DnaK and may function as a thermosensor. Unfolded proteins bind initially to DnaJ; upon interaction with the DnaJ-bound protein, DnaK hydrolyzes its bound ATP, resulting in the formation of a stable complex. GrpE releases ADP from DnaK; ATP binding to DnaK triggers the release of the substrate protein, thus completing the reaction cycle. Several rounds of ATP-dependent interactions between DnaJ, DnaK and GrpE are required for fully efficient folding.</text>
</comment>
<comment type="subunit">
    <text evidence="1">Homodimer.</text>
</comment>
<comment type="subcellular location">
    <subcellularLocation>
        <location evidence="1">Cytoplasm</location>
    </subcellularLocation>
</comment>
<comment type="similarity">
    <text evidence="1">Belongs to the GrpE family.</text>
</comment>